<comment type="catalytic activity">
    <reaction evidence="1">
        <text>sn-glycerol 3-phosphate + an acyl-CoA = a 1-acyl-sn-glycero-3-phosphate + CoA</text>
        <dbReference type="Rhea" id="RHEA:15325"/>
        <dbReference type="ChEBI" id="CHEBI:57287"/>
        <dbReference type="ChEBI" id="CHEBI:57597"/>
        <dbReference type="ChEBI" id="CHEBI:57970"/>
        <dbReference type="ChEBI" id="CHEBI:58342"/>
        <dbReference type="EC" id="2.3.1.15"/>
    </reaction>
</comment>
<comment type="pathway">
    <text evidence="1">Phospholipid metabolism; CDP-diacylglycerol biosynthesis; CDP-diacylglycerol from sn-glycerol 3-phosphate: step 1/3.</text>
</comment>
<comment type="subcellular location">
    <subcellularLocation>
        <location evidence="1">Cell inner membrane</location>
        <topology evidence="1">Peripheral membrane protein</topology>
        <orientation evidence="1">Cytoplasmic side</orientation>
    </subcellularLocation>
</comment>
<comment type="domain">
    <text evidence="1">The HXXXXD motif is essential for acyltransferase activity and may constitute the binding site for the phosphate moiety of the glycerol-3-phosphate.</text>
</comment>
<comment type="similarity">
    <text evidence="1">Belongs to the GPAT/DAPAT family.</text>
</comment>
<reference key="1">
    <citation type="submission" date="2006-08" db="EMBL/GenBank/DDBJ databases">
        <title>Complete sequence of chromosome 1 of Shewanella sp. MR-7.</title>
        <authorList>
            <person name="Copeland A."/>
            <person name="Lucas S."/>
            <person name="Lapidus A."/>
            <person name="Barry K."/>
            <person name="Detter J.C."/>
            <person name="Glavina del Rio T."/>
            <person name="Hammon N."/>
            <person name="Israni S."/>
            <person name="Dalin E."/>
            <person name="Tice H."/>
            <person name="Pitluck S."/>
            <person name="Kiss H."/>
            <person name="Brettin T."/>
            <person name="Bruce D."/>
            <person name="Han C."/>
            <person name="Tapia R."/>
            <person name="Gilna P."/>
            <person name="Schmutz J."/>
            <person name="Larimer F."/>
            <person name="Land M."/>
            <person name="Hauser L."/>
            <person name="Kyrpides N."/>
            <person name="Mikhailova N."/>
            <person name="Nealson K."/>
            <person name="Konstantinidis K."/>
            <person name="Klappenbach J."/>
            <person name="Tiedje J."/>
            <person name="Richardson P."/>
        </authorList>
    </citation>
    <scope>NUCLEOTIDE SEQUENCE [LARGE SCALE GENOMIC DNA]</scope>
    <source>
        <strain>MR-7</strain>
    </source>
</reference>
<proteinExistence type="inferred from homology"/>
<sequence>MPKQDSLWLKSLRWIQKHLVHTIVVPQDPFADLNLDASRPLAYVMKTESLSDIAALSEITTKLGLPSPYEPLVVNGVVAPRVVCLEGRKPLFGERASNEPFLECFMRLLAVHKEKPELDIQLVPVSLYWGRTPGKEDDTMKAAVLERENPTWLRKCLMILFLGRHNFVQFSNAVSLRYMADEHGTDMGIAHKLARVARVHFRRQRKVMTGPVLPNRQALFHSLLKSESLRKAIQEEAASKKISETQARETAIEYLDEIAANYSDSLVRIAERFLTWLWNKLYSGINIKGAEQIRQLHHDGHEIVYVPCHRSHMDYLLLSYILYYQGMVPPHIAAGINLNFWPAGPLFRRGGAFFIRRSFNGNKLYTAVFREYLDQLFAKGYSVEYFSEGGRSRTGRLLAPKTGMIAMTINSVLRGIERPVTLVPVYLGYDHVMEVATYHKELSGKKKQKESVWQVFGAIRKLGNFGQGYVNFGEPITLQNFLNETAPNWRTEVADDPEQKPTWLTPAVNVLANRVMTRINDAAAASSITLTSLVLLASEQNALERCLLERQLDLYLTLLKRVPYTSFTSVAEGDGKHLVQQGLELNKFSISADPLGEIVSIDANQAITMTYYRNNIIHLFIIPSLIASCLTNNKQISRASILGIVNDFYPLLKAELFMGIKDLPSYVNQVLDLFIEQGLVQESDTLSVVTERTSQMLLLAGSVSETLQRYAIIFNLLAHRPKMERSELESESHLLAQRLGALHGITAPEFYDKKLYNTLSVKLKELGYFSEKEDKSDVERIRDQANSLLRASVRQTIVASVTAEHIV</sequence>
<evidence type="ECO:0000255" key="1">
    <source>
        <dbReference type="HAMAP-Rule" id="MF_00393"/>
    </source>
</evidence>
<dbReference type="EC" id="2.3.1.15" evidence="1"/>
<dbReference type="EMBL" id="CP000444">
    <property type="protein sequence ID" value="ABI44838.1"/>
    <property type="molecule type" value="Genomic_DNA"/>
</dbReference>
<dbReference type="SMR" id="Q0HPW7"/>
<dbReference type="KEGG" id="shm:Shewmr7_3861"/>
<dbReference type="HOGENOM" id="CLU_015407_0_0_6"/>
<dbReference type="UniPathway" id="UPA00557">
    <property type="reaction ID" value="UER00612"/>
</dbReference>
<dbReference type="GO" id="GO:0005886">
    <property type="term" value="C:plasma membrane"/>
    <property type="evidence" value="ECO:0007669"/>
    <property type="project" value="UniProtKB-SubCell"/>
</dbReference>
<dbReference type="GO" id="GO:0004366">
    <property type="term" value="F:glycerol-3-phosphate O-acyltransferase activity"/>
    <property type="evidence" value="ECO:0007669"/>
    <property type="project" value="UniProtKB-UniRule"/>
</dbReference>
<dbReference type="GO" id="GO:0016024">
    <property type="term" value="P:CDP-diacylglycerol biosynthetic process"/>
    <property type="evidence" value="ECO:0007669"/>
    <property type="project" value="UniProtKB-UniRule"/>
</dbReference>
<dbReference type="GO" id="GO:0006631">
    <property type="term" value="P:fatty acid metabolic process"/>
    <property type="evidence" value="ECO:0007669"/>
    <property type="project" value="TreeGrafter"/>
</dbReference>
<dbReference type="CDD" id="cd07993">
    <property type="entry name" value="LPLAT_DHAPAT-like"/>
    <property type="match status" value="1"/>
</dbReference>
<dbReference type="HAMAP" id="MF_00393">
    <property type="entry name" value="Glyc3P_acyltrans"/>
    <property type="match status" value="1"/>
</dbReference>
<dbReference type="InterPro" id="IPR022284">
    <property type="entry name" value="GPAT/DHAPAT"/>
</dbReference>
<dbReference type="InterPro" id="IPR045520">
    <property type="entry name" value="GPAT/DHAPAT_C"/>
</dbReference>
<dbReference type="InterPro" id="IPR041728">
    <property type="entry name" value="GPAT/DHAPAT_LPLAT"/>
</dbReference>
<dbReference type="InterPro" id="IPR028354">
    <property type="entry name" value="GPAT_PlsB"/>
</dbReference>
<dbReference type="InterPro" id="IPR002123">
    <property type="entry name" value="Plipid/glycerol_acylTrfase"/>
</dbReference>
<dbReference type="NCBIfam" id="TIGR03703">
    <property type="entry name" value="plsB"/>
    <property type="match status" value="1"/>
</dbReference>
<dbReference type="NCBIfam" id="NF003441">
    <property type="entry name" value="PRK04974.1"/>
    <property type="match status" value="1"/>
</dbReference>
<dbReference type="PANTHER" id="PTHR12563:SF17">
    <property type="entry name" value="DIHYDROXYACETONE PHOSPHATE ACYLTRANSFERASE"/>
    <property type="match status" value="1"/>
</dbReference>
<dbReference type="PANTHER" id="PTHR12563">
    <property type="entry name" value="GLYCEROL-3-PHOSPHATE ACYLTRANSFERASE"/>
    <property type="match status" value="1"/>
</dbReference>
<dbReference type="Pfam" id="PF01553">
    <property type="entry name" value="Acyltransferase"/>
    <property type="match status" value="1"/>
</dbReference>
<dbReference type="Pfam" id="PF19277">
    <property type="entry name" value="GPAT_C"/>
    <property type="match status" value="1"/>
</dbReference>
<dbReference type="PIRSF" id="PIRSF500064">
    <property type="entry name" value="GPAT"/>
    <property type="match status" value="1"/>
</dbReference>
<dbReference type="PIRSF" id="PIRSF000437">
    <property type="entry name" value="GPAT_DHAPAT"/>
    <property type="match status" value="1"/>
</dbReference>
<dbReference type="SMART" id="SM00563">
    <property type="entry name" value="PlsC"/>
    <property type="match status" value="1"/>
</dbReference>
<dbReference type="SUPFAM" id="SSF69593">
    <property type="entry name" value="Glycerol-3-phosphate (1)-acyltransferase"/>
    <property type="match status" value="1"/>
</dbReference>
<name>PLSB_SHESR</name>
<feature type="chain" id="PRO_1000049462" description="Glycerol-3-phosphate acyltransferase">
    <location>
        <begin position="1"/>
        <end position="807"/>
    </location>
</feature>
<feature type="short sequence motif" description="HXXXXD motif">
    <location>
        <begin position="308"/>
        <end position="313"/>
    </location>
</feature>
<gene>
    <name evidence="1" type="primary">plsB</name>
    <name type="ordered locus">Shewmr7_3861</name>
</gene>
<accession>Q0HPW7</accession>
<organism>
    <name type="scientific">Shewanella sp. (strain MR-7)</name>
    <dbReference type="NCBI Taxonomy" id="60481"/>
    <lineage>
        <taxon>Bacteria</taxon>
        <taxon>Pseudomonadati</taxon>
        <taxon>Pseudomonadota</taxon>
        <taxon>Gammaproteobacteria</taxon>
        <taxon>Alteromonadales</taxon>
        <taxon>Shewanellaceae</taxon>
        <taxon>Shewanella</taxon>
    </lineage>
</organism>
<keyword id="KW-0012">Acyltransferase</keyword>
<keyword id="KW-0997">Cell inner membrane</keyword>
<keyword id="KW-1003">Cell membrane</keyword>
<keyword id="KW-0444">Lipid biosynthesis</keyword>
<keyword id="KW-0443">Lipid metabolism</keyword>
<keyword id="KW-0472">Membrane</keyword>
<keyword id="KW-0594">Phospholipid biosynthesis</keyword>
<keyword id="KW-1208">Phospholipid metabolism</keyword>
<keyword id="KW-0808">Transferase</keyword>
<protein>
    <recommendedName>
        <fullName evidence="1">Glycerol-3-phosphate acyltransferase</fullName>
        <shortName evidence="1">GPAT</shortName>
        <ecNumber evidence="1">2.3.1.15</ecNumber>
    </recommendedName>
</protein>